<organism>
    <name type="scientific">Methanocaldococcus jannaschii (strain ATCC 43067 / DSM 2661 / JAL-1 / JCM 10045 / NBRC 100440)</name>
    <name type="common">Methanococcus jannaschii</name>
    <dbReference type="NCBI Taxonomy" id="243232"/>
    <lineage>
        <taxon>Archaea</taxon>
        <taxon>Methanobacteriati</taxon>
        <taxon>Methanobacteriota</taxon>
        <taxon>Methanomada group</taxon>
        <taxon>Methanococci</taxon>
        <taxon>Methanococcales</taxon>
        <taxon>Methanocaldococcaceae</taxon>
        <taxon>Methanocaldococcus</taxon>
    </lineage>
</organism>
<proteinExistence type="predicted"/>
<gene>
    <name type="ordered locus">MJ0636</name>
</gene>
<dbReference type="EMBL" id="L77117">
    <property type="protein sequence ID" value="AAB98630.1"/>
    <property type="molecule type" value="Genomic_DNA"/>
</dbReference>
<dbReference type="PIR" id="D64379">
    <property type="entry name" value="D64379"/>
</dbReference>
<dbReference type="SMR" id="Q58053"/>
<dbReference type="FunCoup" id="Q58053">
    <property type="interactions" value="291"/>
</dbReference>
<dbReference type="STRING" id="243232.MJ_0636"/>
<dbReference type="PaxDb" id="243232-MJ_0636"/>
<dbReference type="EnsemblBacteria" id="AAB98630">
    <property type="protein sequence ID" value="AAB98630"/>
    <property type="gene ID" value="MJ_0636"/>
</dbReference>
<dbReference type="KEGG" id="mja:MJ_0636"/>
<dbReference type="eggNOG" id="arCOG01068">
    <property type="taxonomic scope" value="Archaea"/>
</dbReference>
<dbReference type="HOGENOM" id="CLU_718895_0_0_2"/>
<dbReference type="InParanoid" id="Q58053"/>
<dbReference type="PhylomeDB" id="Q58053"/>
<dbReference type="Proteomes" id="UP000000805">
    <property type="component" value="Chromosome"/>
</dbReference>
<dbReference type="GO" id="GO:0004148">
    <property type="term" value="F:dihydrolipoyl dehydrogenase (NADH) activity"/>
    <property type="evidence" value="ECO:0000318"/>
    <property type="project" value="GO_Central"/>
</dbReference>
<dbReference type="GO" id="GO:0050660">
    <property type="term" value="F:flavin adenine dinucleotide binding"/>
    <property type="evidence" value="ECO:0000318"/>
    <property type="project" value="GO_Central"/>
</dbReference>
<dbReference type="GO" id="GO:0006103">
    <property type="term" value="P:2-oxoglutarate metabolic process"/>
    <property type="evidence" value="ECO:0000318"/>
    <property type="project" value="GO_Central"/>
</dbReference>
<dbReference type="GO" id="GO:0006090">
    <property type="term" value="P:pyruvate metabolic process"/>
    <property type="evidence" value="ECO:0000318"/>
    <property type="project" value="GO_Central"/>
</dbReference>
<dbReference type="Gene3D" id="3.50.50.60">
    <property type="entry name" value="FAD/NAD(P)-binding domain"/>
    <property type="match status" value="2"/>
</dbReference>
<dbReference type="InterPro" id="IPR050151">
    <property type="entry name" value="Class-I_Pyr_Nuc-Dis_Oxidored"/>
</dbReference>
<dbReference type="InterPro" id="IPR036188">
    <property type="entry name" value="FAD/NAD-bd_sf"/>
</dbReference>
<dbReference type="InterPro" id="IPR023753">
    <property type="entry name" value="FAD/NAD-binding_dom"/>
</dbReference>
<dbReference type="PANTHER" id="PTHR22912:SF151">
    <property type="entry name" value="DIHYDROLIPOYL DEHYDROGENASE, MITOCHONDRIAL"/>
    <property type="match status" value="1"/>
</dbReference>
<dbReference type="PANTHER" id="PTHR22912">
    <property type="entry name" value="DISULFIDE OXIDOREDUCTASE"/>
    <property type="match status" value="1"/>
</dbReference>
<dbReference type="Pfam" id="PF07992">
    <property type="entry name" value="Pyr_redox_2"/>
    <property type="match status" value="1"/>
</dbReference>
<dbReference type="PRINTS" id="PR00411">
    <property type="entry name" value="PNDRDTASEI"/>
</dbReference>
<dbReference type="SUPFAM" id="SSF51905">
    <property type="entry name" value="FAD/NAD(P)-binding domain"/>
    <property type="match status" value="1"/>
</dbReference>
<protein>
    <recommendedName>
        <fullName>Uncharacterized protein MJ0636</fullName>
    </recommendedName>
</protein>
<sequence>MLFGESMTLKIAVVGAGPAGRTSAMFLAKNGFDVDLFEKDRVGGTCLNYGCTYITGLREMADIINNLSILKGEKVHLEEIISFKELQEKINKIQDRIRNKLEKETKELGVNIKYKEFKNKHKNDYDYIIYATGRNYPSNYNGYEVLTHKDIPNLRELPENILIIGGGVVATEYASIFSDFGCNVVLYTRSKILKEIKDEEIRDYLMKKVINFKIINDKEELENLLKDESYTKILAIGGNGRFKTDDYLRVLNEEKVYACGDCLINGGGNTPISRMEGRVVAQNIYNEINNKPLIKPNYELIPKTIRLSLTISYVGKQTNNYKTIRSCVGKGNFFKVLSGVGINKIYYEDGKIVGAITMMPCAEILPYFTQLIRGIDVYNNFMEVHPSTDIFYKEFRS</sequence>
<accession>Q58053</accession>
<reference key="1">
    <citation type="journal article" date="1996" name="Science">
        <title>Complete genome sequence of the methanogenic archaeon, Methanococcus jannaschii.</title>
        <authorList>
            <person name="Bult C.J."/>
            <person name="White O."/>
            <person name="Olsen G.J."/>
            <person name="Zhou L."/>
            <person name="Fleischmann R.D."/>
            <person name="Sutton G.G."/>
            <person name="Blake J.A."/>
            <person name="FitzGerald L.M."/>
            <person name="Clayton R.A."/>
            <person name="Gocayne J.D."/>
            <person name="Kerlavage A.R."/>
            <person name="Dougherty B.A."/>
            <person name="Tomb J.-F."/>
            <person name="Adams M.D."/>
            <person name="Reich C.I."/>
            <person name="Overbeek R."/>
            <person name="Kirkness E.F."/>
            <person name="Weinstock K.G."/>
            <person name="Merrick J.M."/>
            <person name="Glodek A."/>
            <person name="Scott J.L."/>
            <person name="Geoghagen N.S.M."/>
            <person name="Weidman J.F."/>
            <person name="Fuhrmann J.L."/>
            <person name="Nguyen D."/>
            <person name="Utterback T.R."/>
            <person name="Kelley J.M."/>
            <person name="Peterson J.D."/>
            <person name="Sadow P.W."/>
            <person name="Hanna M.C."/>
            <person name="Cotton M.D."/>
            <person name="Roberts K.M."/>
            <person name="Hurst M.A."/>
            <person name="Kaine B.P."/>
            <person name="Borodovsky M."/>
            <person name="Klenk H.-P."/>
            <person name="Fraser C.M."/>
            <person name="Smith H.O."/>
            <person name="Woese C.R."/>
            <person name="Venter J.C."/>
        </authorList>
    </citation>
    <scope>NUCLEOTIDE SEQUENCE [LARGE SCALE GENOMIC DNA]</scope>
    <source>
        <strain>ATCC 43067 / DSM 2661 / JAL-1 / JCM 10045 / NBRC 100440</strain>
    </source>
</reference>
<name>Y636_METJA</name>
<feature type="chain" id="PRO_0000106964" description="Uncharacterized protein MJ0636">
    <location>
        <begin position="1"/>
        <end position="397"/>
    </location>
</feature>
<keyword id="KW-1185">Reference proteome</keyword>